<protein>
    <recommendedName>
        <fullName evidence="1">Dihydroorotate dehydrogenase B (NAD(+)), electron transfer subunit</fullName>
    </recommendedName>
    <alternativeName>
        <fullName evidence="1">Dihydroorotate oxidase B, electron transfer subunit</fullName>
    </alternativeName>
</protein>
<organism>
    <name type="scientific">Bacillus cereus (strain ZK / E33L)</name>
    <dbReference type="NCBI Taxonomy" id="288681"/>
    <lineage>
        <taxon>Bacteria</taxon>
        <taxon>Bacillati</taxon>
        <taxon>Bacillota</taxon>
        <taxon>Bacilli</taxon>
        <taxon>Bacillales</taxon>
        <taxon>Bacillaceae</taxon>
        <taxon>Bacillus</taxon>
        <taxon>Bacillus cereus group</taxon>
    </lineage>
</organism>
<sequence>MMQKQNMIVVNQKEIAKNIYELVLQGTLVQQMNEPGQFVHIKVAEGIAPLLRRPISICNVDQEKNEFTMLYRAEGQGTKTLATRKQGEMVDVLGPLGHGFPVEEAEAGQTALLVGGGIGVPPLYELSQRLVAKGVRVIHILGFQTKDVVFYEEKFAELGDTYVATVDGTHGTKGFVTDVIDHYGIDFDILYSCGPLAMLRALEGRYKEKKAYISLEERMGCGIGACFACVCHLQEDPSGHSYKKVCSDGPVFPIGEVVL</sequence>
<evidence type="ECO:0000255" key="1">
    <source>
        <dbReference type="HAMAP-Rule" id="MF_01211"/>
    </source>
</evidence>
<accession>Q636E1</accession>
<proteinExistence type="inferred from homology"/>
<comment type="function">
    <text evidence="1">Responsible for channeling the electrons from the oxidation of dihydroorotate from the FMN redox center in the PyrD type B subunit to the ultimate electron acceptor NAD(+).</text>
</comment>
<comment type="cofactor">
    <cofactor evidence="1">
        <name>[2Fe-2S] cluster</name>
        <dbReference type="ChEBI" id="CHEBI:190135"/>
    </cofactor>
    <text evidence="1">Binds 1 [2Fe-2S] cluster per subunit.</text>
</comment>
<comment type="cofactor">
    <cofactor evidence="1">
        <name>FAD</name>
        <dbReference type="ChEBI" id="CHEBI:57692"/>
    </cofactor>
    <text evidence="1">Binds 1 FAD per subunit.</text>
</comment>
<comment type="pathway">
    <text evidence="1">Pyrimidine metabolism; UMP biosynthesis via de novo pathway; orotate from (S)-dihydroorotate (NAD(+) route): step 1/1.</text>
</comment>
<comment type="subunit">
    <text evidence="1">Heterotetramer of 2 PyrK and 2 PyrD type B subunits.</text>
</comment>
<comment type="similarity">
    <text evidence="1">Belongs to the PyrK family.</text>
</comment>
<keyword id="KW-0001">2Fe-2S</keyword>
<keyword id="KW-0249">Electron transport</keyword>
<keyword id="KW-0274">FAD</keyword>
<keyword id="KW-0285">Flavoprotein</keyword>
<keyword id="KW-0408">Iron</keyword>
<keyword id="KW-0411">Iron-sulfur</keyword>
<keyword id="KW-0479">Metal-binding</keyword>
<keyword id="KW-0665">Pyrimidine biosynthesis</keyword>
<keyword id="KW-0813">Transport</keyword>
<name>PYRK_BACCZ</name>
<feature type="chain" id="PRO_1000066397" description="Dihydroorotate dehydrogenase B (NAD(+)), electron transfer subunit">
    <location>
        <begin position="1"/>
        <end position="259"/>
    </location>
</feature>
<feature type="domain" description="FAD-binding FR-type" evidence="1">
    <location>
        <begin position="2"/>
        <end position="102"/>
    </location>
</feature>
<feature type="binding site" evidence="1">
    <location>
        <begin position="53"/>
        <end position="56"/>
    </location>
    <ligand>
        <name>FAD</name>
        <dbReference type="ChEBI" id="CHEBI:57692"/>
    </ligand>
</feature>
<feature type="binding site" evidence="1">
    <location>
        <begin position="70"/>
        <end position="72"/>
    </location>
    <ligand>
        <name>FAD</name>
        <dbReference type="ChEBI" id="CHEBI:57692"/>
    </ligand>
</feature>
<feature type="binding site" evidence="1">
    <location>
        <begin position="77"/>
        <end position="78"/>
    </location>
    <ligand>
        <name>FAD</name>
        <dbReference type="ChEBI" id="CHEBI:57692"/>
    </ligand>
</feature>
<feature type="binding site" evidence="1">
    <location>
        <position position="221"/>
    </location>
    <ligand>
        <name>[2Fe-2S] cluster</name>
        <dbReference type="ChEBI" id="CHEBI:190135"/>
    </ligand>
</feature>
<feature type="binding site" evidence="1">
    <location>
        <position position="226"/>
    </location>
    <ligand>
        <name>[2Fe-2S] cluster</name>
        <dbReference type="ChEBI" id="CHEBI:190135"/>
    </ligand>
</feature>
<feature type="binding site" evidence="1">
    <location>
        <position position="229"/>
    </location>
    <ligand>
        <name>[2Fe-2S] cluster</name>
        <dbReference type="ChEBI" id="CHEBI:190135"/>
    </ligand>
</feature>
<feature type="binding site" evidence="1">
    <location>
        <position position="246"/>
    </location>
    <ligand>
        <name>[2Fe-2S] cluster</name>
        <dbReference type="ChEBI" id="CHEBI:190135"/>
    </ligand>
</feature>
<reference key="1">
    <citation type="journal article" date="2006" name="J. Bacteriol.">
        <title>Pathogenomic sequence analysis of Bacillus cereus and Bacillus thuringiensis isolates closely related to Bacillus anthracis.</title>
        <authorList>
            <person name="Han C.S."/>
            <person name="Xie G."/>
            <person name="Challacombe J.F."/>
            <person name="Altherr M.R."/>
            <person name="Bhotika S.S."/>
            <person name="Bruce D."/>
            <person name="Campbell C.S."/>
            <person name="Campbell M.L."/>
            <person name="Chen J."/>
            <person name="Chertkov O."/>
            <person name="Cleland C."/>
            <person name="Dimitrijevic M."/>
            <person name="Doggett N.A."/>
            <person name="Fawcett J.J."/>
            <person name="Glavina T."/>
            <person name="Goodwin L.A."/>
            <person name="Hill K.K."/>
            <person name="Hitchcock P."/>
            <person name="Jackson P.J."/>
            <person name="Keim P."/>
            <person name="Kewalramani A.R."/>
            <person name="Longmire J."/>
            <person name="Lucas S."/>
            <person name="Malfatti S."/>
            <person name="McMurry K."/>
            <person name="Meincke L.J."/>
            <person name="Misra M."/>
            <person name="Moseman B.L."/>
            <person name="Mundt M."/>
            <person name="Munk A.C."/>
            <person name="Okinaka R.T."/>
            <person name="Parson-Quintana B."/>
            <person name="Reilly L.P."/>
            <person name="Richardson P."/>
            <person name="Robinson D.L."/>
            <person name="Rubin E."/>
            <person name="Saunders E."/>
            <person name="Tapia R."/>
            <person name="Tesmer J.G."/>
            <person name="Thayer N."/>
            <person name="Thompson L.S."/>
            <person name="Tice H."/>
            <person name="Ticknor L.O."/>
            <person name="Wills P.L."/>
            <person name="Brettin T.S."/>
            <person name="Gilna P."/>
        </authorList>
    </citation>
    <scope>NUCLEOTIDE SEQUENCE [LARGE SCALE GENOMIC DNA]</scope>
    <source>
        <strain>ZK / E33L</strain>
    </source>
</reference>
<gene>
    <name evidence="1" type="primary">pyrK</name>
    <name type="ordered locus">BCE33L3644</name>
</gene>
<dbReference type="EMBL" id="CP000001">
    <property type="protein sequence ID" value="AAU16622.1"/>
    <property type="molecule type" value="Genomic_DNA"/>
</dbReference>
<dbReference type="RefSeq" id="WP_000983358.1">
    <property type="nucleotide sequence ID" value="NZ_CP009968.1"/>
</dbReference>
<dbReference type="SMR" id="Q636E1"/>
<dbReference type="GeneID" id="75087022"/>
<dbReference type="KEGG" id="bcz:BCE33L3644"/>
<dbReference type="PATRIC" id="fig|288681.22.peg.1767"/>
<dbReference type="UniPathway" id="UPA00070">
    <property type="reaction ID" value="UER00945"/>
</dbReference>
<dbReference type="Proteomes" id="UP000002612">
    <property type="component" value="Chromosome"/>
</dbReference>
<dbReference type="GO" id="GO:0051537">
    <property type="term" value="F:2 iron, 2 sulfur cluster binding"/>
    <property type="evidence" value="ECO:0007669"/>
    <property type="project" value="UniProtKB-KW"/>
</dbReference>
<dbReference type="GO" id="GO:0009055">
    <property type="term" value="F:electron transfer activity"/>
    <property type="evidence" value="ECO:0007669"/>
    <property type="project" value="UniProtKB-UniRule"/>
</dbReference>
<dbReference type="GO" id="GO:0050660">
    <property type="term" value="F:flavin adenine dinucleotide binding"/>
    <property type="evidence" value="ECO:0007669"/>
    <property type="project" value="InterPro"/>
</dbReference>
<dbReference type="GO" id="GO:0046872">
    <property type="term" value="F:metal ion binding"/>
    <property type="evidence" value="ECO:0007669"/>
    <property type="project" value="UniProtKB-KW"/>
</dbReference>
<dbReference type="GO" id="GO:0016491">
    <property type="term" value="F:oxidoreductase activity"/>
    <property type="evidence" value="ECO:0007669"/>
    <property type="project" value="InterPro"/>
</dbReference>
<dbReference type="GO" id="GO:0044205">
    <property type="term" value="P:'de novo' UMP biosynthetic process"/>
    <property type="evidence" value="ECO:0007669"/>
    <property type="project" value="UniProtKB-UniRule"/>
</dbReference>
<dbReference type="CDD" id="cd06218">
    <property type="entry name" value="DHOD_e_trans"/>
    <property type="match status" value="1"/>
</dbReference>
<dbReference type="FunFam" id="2.10.240.10:FF:000001">
    <property type="entry name" value="Dihydroorotate dehydrogenase B (NAD(+)), electron transfer subunit"/>
    <property type="match status" value="1"/>
</dbReference>
<dbReference type="FunFam" id="2.40.30.10:FF:000045">
    <property type="entry name" value="Dihydroorotate dehydrogenase B (NAD(+)), electron transfer subunit"/>
    <property type="match status" value="1"/>
</dbReference>
<dbReference type="FunFam" id="3.40.50.80:FF:000017">
    <property type="entry name" value="Dihydroorotate dehydrogenase B (NAD(+)), electron transfer subunit"/>
    <property type="match status" value="1"/>
</dbReference>
<dbReference type="Gene3D" id="2.10.240.10">
    <property type="entry name" value="Dihydroorotate dehydrogenase, electron transfer subunit"/>
    <property type="match status" value="1"/>
</dbReference>
<dbReference type="Gene3D" id="3.40.50.80">
    <property type="entry name" value="Nucleotide-binding domain of ferredoxin-NADP reductase (FNR) module"/>
    <property type="match status" value="1"/>
</dbReference>
<dbReference type="Gene3D" id="2.40.30.10">
    <property type="entry name" value="Translation factors"/>
    <property type="match status" value="1"/>
</dbReference>
<dbReference type="HAMAP" id="MF_01211">
    <property type="entry name" value="DHODB_Fe_S_bind"/>
    <property type="match status" value="1"/>
</dbReference>
<dbReference type="InterPro" id="IPR012165">
    <property type="entry name" value="Cyt_c3_hydrogenase_gsu"/>
</dbReference>
<dbReference type="InterPro" id="IPR037117">
    <property type="entry name" value="Dihydroorotate_DH_ele_sf"/>
</dbReference>
<dbReference type="InterPro" id="IPR019480">
    <property type="entry name" value="Dihydroorotate_DH_Fe-S-bd"/>
</dbReference>
<dbReference type="InterPro" id="IPR023455">
    <property type="entry name" value="Dihydroorotate_DHASE_ETsu"/>
</dbReference>
<dbReference type="InterPro" id="IPR017927">
    <property type="entry name" value="FAD-bd_FR_type"/>
</dbReference>
<dbReference type="InterPro" id="IPR039261">
    <property type="entry name" value="FNR_nucleotide-bd"/>
</dbReference>
<dbReference type="InterPro" id="IPR001433">
    <property type="entry name" value="OxRdtase_FAD/NAD-bd"/>
</dbReference>
<dbReference type="InterPro" id="IPR050353">
    <property type="entry name" value="PyrK_electron_transfer"/>
</dbReference>
<dbReference type="InterPro" id="IPR017938">
    <property type="entry name" value="Riboflavin_synthase-like_b-brl"/>
</dbReference>
<dbReference type="NCBIfam" id="NF000797">
    <property type="entry name" value="PRK00054.1-2"/>
    <property type="match status" value="1"/>
</dbReference>
<dbReference type="NCBIfam" id="NF000799">
    <property type="entry name" value="PRK00054.1-4"/>
    <property type="match status" value="1"/>
</dbReference>
<dbReference type="PANTHER" id="PTHR43513">
    <property type="entry name" value="DIHYDROOROTATE DEHYDROGENASE B (NAD(+)), ELECTRON TRANSFER SUBUNIT"/>
    <property type="match status" value="1"/>
</dbReference>
<dbReference type="PANTHER" id="PTHR43513:SF3">
    <property type="entry name" value="DIHYDROOROTATE DEHYDROGENASE B (NAD(+)), ELECTRON TRANSFER SUBUNIT-RELATED"/>
    <property type="match status" value="1"/>
</dbReference>
<dbReference type="Pfam" id="PF10418">
    <property type="entry name" value="DHODB_Fe-S_bind"/>
    <property type="match status" value="1"/>
</dbReference>
<dbReference type="Pfam" id="PF00175">
    <property type="entry name" value="NAD_binding_1"/>
    <property type="match status" value="1"/>
</dbReference>
<dbReference type="PIRSF" id="PIRSF006816">
    <property type="entry name" value="Cyc3_hyd_g"/>
    <property type="match status" value="1"/>
</dbReference>
<dbReference type="PRINTS" id="PR00409">
    <property type="entry name" value="PHDIOXRDTASE"/>
</dbReference>
<dbReference type="SUPFAM" id="SSF52343">
    <property type="entry name" value="Ferredoxin reductase-like, C-terminal NADP-linked domain"/>
    <property type="match status" value="1"/>
</dbReference>
<dbReference type="SUPFAM" id="SSF63380">
    <property type="entry name" value="Riboflavin synthase domain-like"/>
    <property type="match status" value="1"/>
</dbReference>
<dbReference type="PROSITE" id="PS51384">
    <property type="entry name" value="FAD_FR"/>
    <property type="match status" value="1"/>
</dbReference>